<comment type="function">
    <text evidence="2 3 4">Catalyzes a mechanistically unusual reaction, the ATP-dependent insertion of CO2 between the N7 and N8 nitrogen atoms of 7,8-diaminopelargonic acid (DAPA, also called 7,8-diammoniononanoate) to form a ureido ring. Only CTP can partially replace ATP while diaminobiotin is only 37% as effective as 7,8-diaminopelargonic acid (PubMed:4892372, PubMed:4921568). In another study both CTP and GTP (but not ITP, TTP or UTP) can partially replace ATP (PubMed:25801336).</text>
</comment>
<comment type="catalytic activity">
    <reaction evidence="1 4">
        <text>(7R,8S)-7,8-diammoniononanoate + CO2 + ATP = (4R,5S)-dethiobiotin + ADP + phosphate + 3 H(+)</text>
        <dbReference type="Rhea" id="RHEA:15805"/>
        <dbReference type="ChEBI" id="CHEBI:15378"/>
        <dbReference type="ChEBI" id="CHEBI:16526"/>
        <dbReference type="ChEBI" id="CHEBI:30616"/>
        <dbReference type="ChEBI" id="CHEBI:43474"/>
        <dbReference type="ChEBI" id="CHEBI:149469"/>
        <dbReference type="ChEBI" id="CHEBI:149473"/>
        <dbReference type="ChEBI" id="CHEBI:456216"/>
        <dbReference type="EC" id="6.3.3.3"/>
    </reaction>
</comment>
<comment type="cofactor">
    <cofactor evidence="1 5 6 10 11">
        <name>Mg(2+)</name>
        <dbReference type="ChEBI" id="CHEBI:18420"/>
    </cofactor>
    <text evidence="5 6 10 11">Binds 1 Mg(2+) per subunit, in one structure a second Mg(2+) was seen.</text>
</comment>
<comment type="biophysicochemical properties">
    <kinetics>
        <KM evidence="2">15.2 uM for DAPA (at pH 7.5, 37 degrees Celsius)</KM>
        <KM evidence="2">600 uM for NaHCO3 (at pH 7.5, 37 degrees Celsius)</KM>
        <KM evidence="2">10.5 uM for ATP (at pH 7.5, 37 degrees Celsius)</KM>
        <KM evidence="2">1.1 mM for CTP (at pH 7.5, 37 degrees Celsius)</KM>
        <KM evidence="2">1.56 mM for GTP (at pH 7.5, 37 degrees Celsius)</KM>
    </kinetics>
</comment>
<comment type="pathway">
    <text evidence="1">Cofactor biosynthesis; biotin biosynthesis; biotin from 7,8-diaminononanoate: step 1/2.</text>
</comment>
<comment type="subunit">
    <text evidence="1 4 5 6 7 10 11">Homodimer.</text>
</comment>
<comment type="subcellular location">
    <subcellularLocation>
        <location evidence="1">Cytoplasm</location>
    </subcellularLocation>
</comment>
<comment type="similarity">
    <text evidence="1">Belongs to the dethiobiotin synthetase family.</text>
</comment>
<keyword id="KW-0002">3D-structure</keyword>
<keyword id="KW-0067">ATP-binding</keyword>
<keyword id="KW-0093">Biotin biosynthesis</keyword>
<keyword id="KW-0963">Cytoplasm</keyword>
<keyword id="KW-0903">Direct protein sequencing</keyword>
<keyword id="KW-0436">Ligase</keyword>
<keyword id="KW-0460">Magnesium</keyword>
<keyword id="KW-0479">Metal-binding</keyword>
<keyword id="KW-0547">Nucleotide-binding</keyword>
<keyword id="KW-1185">Reference proteome</keyword>
<organism>
    <name type="scientific">Escherichia coli (strain K12)</name>
    <dbReference type="NCBI Taxonomy" id="83333"/>
    <lineage>
        <taxon>Bacteria</taxon>
        <taxon>Pseudomonadati</taxon>
        <taxon>Pseudomonadota</taxon>
        <taxon>Gammaproteobacteria</taxon>
        <taxon>Enterobacterales</taxon>
        <taxon>Enterobacteriaceae</taxon>
        <taxon>Escherichia</taxon>
    </lineage>
</organism>
<accession>P13000</accession>
<accession>Q2MBJ1</accession>
<gene>
    <name evidence="1" type="primary">bioD1</name>
    <name type="ordered locus">b0778</name>
    <name type="ordered locus">JW0761</name>
</gene>
<protein>
    <recommendedName>
        <fullName evidence="1">ATP-dependent dethiobiotin synthetase BioD 1</fullName>
        <ecNumber evidence="1">6.3.3.3</ecNumber>
    </recommendedName>
    <alternativeName>
        <fullName evidence="1">DTB synthetase 1</fullName>
        <shortName evidence="1">DTBS 1</shortName>
    </alternativeName>
    <alternativeName>
        <fullName evidence="1">Dethiobiotin synthase 1</fullName>
    </alternativeName>
</protein>
<reference key="1">
    <citation type="journal article" date="1988" name="J. Biol. Chem.">
        <title>The Escherichia coli biotin biosynthetic enzyme sequences predicted from the nucleotide sequence of the bio operon.</title>
        <authorList>
            <person name="Otsuka A.J."/>
            <person name="Buoncristiani M.R."/>
            <person name="Howard P.K."/>
            <person name="Flamm J."/>
            <person name="Johnson O."/>
            <person name="Yamamoto R."/>
            <person name="Uchida K."/>
            <person name="Cook C."/>
            <person name="Ruppert J."/>
            <person name="Matsuzaki J."/>
        </authorList>
    </citation>
    <scope>NUCLEOTIDE SEQUENCE [GENOMIC DNA]</scope>
</reference>
<reference key="2">
    <citation type="journal article" date="1994" name="J. Mol. Biol.">
        <title>Sequence and crystallization of Escherichia coli dethiobiotin synthetase, the penultimate enzyme of biotin biosynthesis.</title>
        <authorList>
            <person name="Alexeev D."/>
            <person name="Bury S.M."/>
            <person name="Boys C.W.G."/>
            <person name="Turner M.A."/>
            <person name="Sawyer L."/>
            <person name="Ramsey A.J."/>
            <person name="Baxter H.C."/>
            <person name="Baxter R.L."/>
        </authorList>
    </citation>
    <scope>NUCLEOTIDE SEQUENCE [GENOMIC DNA]</scope>
    <scope>PROTEIN SEQUENCE OF 2-20 AND 224-225</scope>
</reference>
<reference key="3">
    <citation type="patent" date="1989-10-11" number="GB2216530">
        <title>Genetic material for expression of biotin synthetase enzymes.</title>
        <authorList>
            <person name="Pearson B.M."/>
            <person name="McKee R.A."/>
        </authorList>
    </citation>
    <scope>NUCLEOTIDE SEQUENCE [GENOMIC DNA]</scope>
</reference>
<reference key="4">
    <citation type="journal article" date="1997" name="Science">
        <title>The complete genome sequence of Escherichia coli K-12.</title>
        <authorList>
            <person name="Blattner F.R."/>
            <person name="Plunkett G. III"/>
            <person name="Bloch C.A."/>
            <person name="Perna N.T."/>
            <person name="Burland V."/>
            <person name="Riley M."/>
            <person name="Collado-Vides J."/>
            <person name="Glasner J.D."/>
            <person name="Rode C.K."/>
            <person name="Mayhew G.F."/>
            <person name="Gregor J."/>
            <person name="Davis N.W."/>
            <person name="Kirkpatrick H.A."/>
            <person name="Goeden M.A."/>
            <person name="Rose D.J."/>
            <person name="Mau B."/>
            <person name="Shao Y."/>
        </authorList>
    </citation>
    <scope>NUCLEOTIDE SEQUENCE [LARGE SCALE GENOMIC DNA]</scope>
    <source>
        <strain>K12 / MG1655 / ATCC 47076</strain>
    </source>
</reference>
<reference key="5">
    <citation type="journal article" date="2006" name="Mol. Syst. Biol.">
        <title>Highly accurate genome sequences of Escherichia coli K-12 strains MG1655 and W3110.</title>
        <authorList>
            <person name="Hayashi K."/>
            <person name="Morooka N."/>
            <person name="Yamamoto Y."/>
            <person name="Fujita K."/>
            <person name="Isono K."/>
            <person name="Choi S."/>
            <person name="Ohtsubo E."/>
            <person name="Baba T."/>
            <person name="Wanner B.L."/>
            <person name="Mori H."/>
            <person name="Horiuchi T."/>
        </authorList>
    </citation>
    <scope>NUCLEOTIDE SEQUENCE [LARGE SCALE GENOMIC DNA]</scope>
    <source>
        <strain>K12 / W3110 / ATCC 27325 / DSM 5911</strain>
    </source>
</reference>
<reference key="6">
    <citation type="journal article" date="1969" name="J. Bacteriol.">
        <title>Synthesis of desthiobiotin from 7,8-diaminopelargonic acid in biotin auxotrophs of Escherichia coli K-12.</title>
        <authorList>
            <person name="Eisenberg M.A."/>
            <person name="Krell K."/>
        </authorList>
    </citation>
    <scope>FUNCTION IN BIOTIN BIOSYNTHESIS</scope>
</reference>
<reference key="7">
    <citation type="journal article" date="1970" name="J. Biol. Chem.">
        <title>The purification and properties of dethiobiotin synthetase.</title>
        <authorList>
            <person name="Krell K."/>
            <person name="Eisenberg M.A."/>
        </authorList>
    </citation>
    <scope>FUNCTION AS A DETHIOBIOTIN SYNTHETASE</scope>
    <scope>CATALYTIC ACTIVITY</scope>
    <scope>SUBSTRATE SPECIFICITY</scope>
    <scope>SUBUNIT</scope>
</reference>
<reference key="8">
    <citation type="journal article" date="1997" name="Biochemistry">
        <title>Active site mutants of Escherichia coli dethiobiotin synthetase: effects of mutations on enzyme catalytic and structural properties.</title>
        <authorList>
            <person name="Yang G."/>
            <person name="Sandalova T."/>
            <person name="Lohman K."/>
            <person name="Lindqvist Y."/>
            <person name="Rendina A.R."/>
        </authorList>
    </citation>
    <scope>ACTIVE SITE</scope>
    <scope>MUTAGENESIS OF THR-12; GLU-13; LYS-16; LYS-38 AND SER-42</scope>
</reference>
<reference key="9">
    <citation type="journal article" date="2015" name="Tuberculosis">
        <title>Nucleotide triphosphate promiscuity in Mycobacterium tuberculosis dethiobiotin synthetase.</title>
        <authorList>
            <person name="Salaemae W."/>
            <person name="Yap M.Y."/>
            <person name="Wegener K.L."/>
            <person name="Booker G.W."/>
            <person name="Wilce M.C."/>
            <person name="Polyak S.W."/>
        </authorList>
    </citation>
    <scope>FUNCTION</scope>
    <scope>BIOPHYSICOCHEMICAL PROPERTIES</scope>
    <scope>MUTAGENESIS OF ASN-176</scope>
    <source>
        <strain>K12</strain>
    </source>
</reference>
<reference evidence="26" key="10">
    <citation type="journal article" date="1994" name="Structure">
        <title>Crystal structure of an ATP-dependent carboxylase, dethiobiotin synthetase, at 1.65-A resolution.</title>
        <authorList>
            <person name="Huang W."/>
            <person name="Lindqvist Y."/>
            <person name="Schneider G."/>
            <person name="Gibson K.J."/>
            <person name="Flint D."/>
            <person name="Lorimer G."/>
        </authorList>
    </citation>
    <scope>X-RAY CRYSTALLOGRAPHY (1.65 ANGSTROMS)</scope>
    <scope>SUBUNIT</scope>
</reference>
<reference evidence="25" key="11">
    <citation type="journal article" date="1994" name="Structure">
        <title>Mechanistic implications and family relationships from the structure of dethiobiotin synthetase.</title>
        <authorList>
            <person name="Alexeev D."/>
            <person name="Baxter R.L."/>
            <person name="Sawyer L."/>
        </authorList>
    </citation>
    <scope>X-RAY CRYSTALLOGRAPHY (1.8 ANGSTROMS) IN COMPLEX WITH SUBSTRATE ANALOGS</scope>
    <scope>ATP AND MAGNESIUM IONS</scope>
    <scope>SUBUNIT</scope>
</reference>
<reference evidence="17 18 19 20 21 22" key="12">
    <citation type="journal article" date="1995" name="Biochemistry">
        <title>Mechanism of an ATP-dependent carboxylase, dethiobiotin synthetase, based on crystallographic studies of complexes with substrates and a reaction intermediate.</title>
        <authorList>
            <person name="Huang W."/>
            <person name="Jia J."/>
            <person name="Gibson K.J."/>
            <person name="Taylor W.S."/>
            <person name="Rendina A.R."/>
            <person name="Schneider G."/>
            <person name="Lindqvist Y."/>
        </authorList>
    </citation>
    <scope>X-RAY CRYSTALLOGRAPHY (1.6 ANGSTROMS) OF 2-224 IN COMPLEX WITH SUBSTRATE ANALOGS</scope>
    <scope>ATP AND MAGNESIUM IONS</scope>
    <scope>REACTION MECHANISM</scope>
</reference>
<reference evidence="14 23" key="13">
    <citation type="journal article" date="1998" name="Proc. Natl. Acad. Sci. U.S.A.">
        <title>Snapshot of a phosphorylated substrate intermediate by kinetic crystallography.</title>
        <authorList>
            <person name="Kaeck H."/>
            <person name="Gibson K.J."/>
            <person name="Lindqvist Y."/>
            <person name="Schneider G."/>
        </authorList>
    </citation>
    <scope>X-RAY CRYSTALLOGRAPHY (1.6 ANGSTROMS) IN COMPLEX WITH SUBSTRATE ANALOGS</scope>
    <scope>ATP</scope>
    <scope>MAGNESIUM IONS</scope>
</reference>
<reference evidence="15 24" key="14">
    <citation type="journal article" date="1998" name="Protein Sci.">
        <title>Crystal structure of two quaternary complexes of dethiobiotin synthetase, enzyme-MgADP-AlF3-diaminopelargonic acid and enzyme-MgADP-dethiobiotin-phosphate; implications for catalysis.</title>
        <authorList>
            <person name="Kaeck H."/>
            <person name="Sandmark J."/>
            <person name="Gibson K.J."/>
            <person name="Schneider G."/>
            <person name="Lindqvist Y."/>
        </authorList>
    </citation>
    <scope>X-RAY CRYSTALLOGRAPHY (1.8 ANGSTROMS) IN COMPLEX WITH SUBSTRATE ANALOGS</scope>
    <scope>ATP AND MAGNESIUM IONS</scope>
    <scope>SUBUNIT</scope>
</reference>
<reference evidence="16" key="15">
    <citation type="journal article" date="1999" name="Acta Crystallogr. D">
        <title>Structure of dethiobiotin synthetase at 0.97-A resolution.</title>
        <authorList>
            <person name="Sandalova T."/>
            <person name="Schneider G."/>
            <person name="Kack H."/>
            <person name="Lindqvist Y."/>
        </authorList>
    </citation>
    <scope>X-RAY CRYSTALLOGRAPHY (0.97 ANGSTROMS)</scope>
</reference>
<proteinExistence type="evidence at protein level"/>
<evidence type="ECO:0000255" key="1">
    <source>
        <dbReference type="HAMAP-Rule" id="MF_00336"/>
    </source>
</evidence>
<evidence type="ECO:0000269" key="2">
    <source>
    </source>
</evidence>
<evidence type="ECO:0000269" key="3">
    <source>
    </source>
</evidence>
<evidence type="ECO:0000269" key="4">
    <source>
    </source>
</evidence>
<evidence type="ECO:0000269" key="5">
    <source>
    </source>
</evidence>
<evidence type="ECO:0000269" key="6">
    <source>
    </source>
</evidence>
<evidence type="ECO:0000269" key="7">
    <source>
    </source>
</evidence>
<evidence type="ECO:0000269" key="8">
    <source>
    </source>
</evidence>
<evidence type="ECO:0000269" key="9">
    <source>
    </source>
</evidence>
<evidence type="ECO:0000269" key="10">
    <source>
    </source>
</evidence>
<evidence type="ECO:0000269" key="11">
    <source>
    </source>
</evidence>
<evidence type="ECO:0000305" key="12"/>
<evidence type="ECO:0000305" key="13">
    <source>
    </source>
</evidence>
<evidence type="ECO:0007744" key="14">
    <source>
        <dbReference type="PDB" id="1A82"/>
    </source>
</evidence>
<evidence type="ECO:0007744" key="15">
    <source>
        <dbReference type="PDB" id="1BS1"/>
    </source>
</evidence>
<evidence type="ECO:0007744" key="16">
    <source>
        <dbReference type="PDB" id="1BYI"/>
    </source>
</evidence>
<evidence type="ECO:0007744" key="17">
    <source>
        <dbReference type="PDB" id="1DAD"/>
    </source>
</evidence>
<evidence type="ECO:0007744" key="18">
    <source>
        <dbReference type="PDB" id="1DAE"/>
    </source>
</evidence>
<evidence type="ECO:0007744" key="19">
    <source>
        <dbReference type="PDB" id="1DAF"/>
    </source>
</evidence>
<evidence type="ECO:0007744" key="20">
    <source>
        <dbReference type="PDB" id="1DAG"/>
    </source>
</evidence>
<evidence type="ECO:0007744" key="21">
    <source>
        <dbReference type="PDB" id="1DAH"/>
    </source>
</evidence>
<evidence type="ECO:0007744" key="22">
    <source>
        <dbReference type="PDB" id="1DAI"/>
    </source>
</evidence>
<evidence type="ECO:0007744" key="23">
    <source>
        <dbReference type="PDB" id="1DAK"/>
    </source>
</evidence>
<evidence type="ECO:0007744" key="24">
    <source>
        <dbReference type="PDB" id="1DAM"/>
    </source>
</evidence>
<evidence type="ECO:0007744" key="25">
    <source>
        <dbReference type="PDB" id="1DBS"/>
    </source>
</evidence>
<evidence type="ECO:0007744" key="26">
    <source>
        <dbReference type="PDB" id="1DTS"/>
    </source>
</evidence>
<evidence type="ECO:0007829" key="27">
    <source>
        <dbReference type="PDB" id="1BYI"/>
    </source>
</evidence>
<evidence type="ECO:0007829" key="28">
    <source>
        <dbReference type="PDB" id="1DAD"/>
    </source>
</evidence>
<evidence type="ECO:0007829" key="29">
    <source>
        <dbReference type="PDB" id="1DAI"/>
    </source>
</evidence>
<sequence length="225" mass="24140">MSKRYFVTGTDTEVGKTVASCALLQAAKAAGYRTAGYKPVASGSEKTPEGLRNSDALALQRNSSLQLDYATVNPYTFAEPTSPHIISAQEGRPIESLVMSAGLRALEQQADWVLVEGAGGWFTPLSDTFTFADWVTQEQLPVILVVGVKLGCINHAMLTAQVIQHAGLTLAGWVANDVTPPGKRHAEYMTTLTRMIPAPLLGEIPWLAENPENAATGKYINLALL</sequence>
<feature type="initiator methionine" description="Removed" evidence="8">
    <location>
        <position position="1"/>
    </location>
</feature>
<feature type="chain" id="PRO_0000187961" description="ATP-dependent dethiobiotin synthetase BioD 1">
    <location>
        <begin position="2"/>
        <end position="225"/>
    </location>
</feature>
<feature type="active site" evidence="1 13">
    <location>
        <position position="38"/>
    </location>
</feature>
<feature type="binding site" evidence="1 5 10 11 14 15 17 19 20 21 23 24">
    <location>
        <begin position="13"/>
        <end position="18"/>
    </location>
    <ligand>
        <name>ATP</name>
        <dbReference type="ChEBI" id="CHEBI:30616"/>
    </ligand>
</feature>
<feature type="binding site" evidence="11 15">
    <location>
        <position position="13"/>
    </location>
    <ligand>
        <name>Mg(2+)</name>
        <dbReference type="ChEBI" id="CHEBI:18420"/>
        <label>1</label>
    </ligand>
</feature>
<feature type="binding site" evidence="1 10 11 14 15 23 24">
    <location>
        <position position="17"/>
    </location>
    <ligand>
        <name>Mg(2+)</name>
        <dbReference type="ChEBI" id="CHEBI:18420"/>
        <label>2</label>
    </ligand>
</feature>
<feature type="binding site" evidence="1 5 10 11 15 18 19 20 21 22 23 24">
    <location>
        <position position="42"/>
    </location>
    <ligand>
        <name>substrate</name>
    </ligand>
</feature>
<feature type="binding site" evidence="1 10 14">
    <location>
        <position position="55"/>
    </location>
    <ligand>
        <name>ATP</name>
        <dbReference type="ChEBI" id="CHEBI:30616"/>
    </ligand>
</feature>
<feature type="binding site" evidence="1 10 11 14 15 23 24">
    <location>
        <position position="55"/>
    </location>
    <ligand>
        <name>Mg(2+)</name>
        <dbReference type="ChEBI" id="CHEBI:18420"/>
        <label>2</label>
    </ligand>
</feature>
<feature type="binding site" evidence="1 10 14 23">
    <location>
        <begin position="116"/>
        <end position="119"/>
    </location>
    <ligand>
        <name>ATP</name>
        <dbReference type="ChEBI" id="CHEBI:30616"/>
    </ligand>
</feature>
<feature type="binding site" evidence="1 10 11 14 15 23 24">
    <location>
        <position position="116"/>
    </location>
    <ligand>
        <name>Mg(2+)</name>
        <dbReference type="ChEBI" id="CHEBI:18420"/>
        <label>2</label>
    </ligand>
</feature>
<feature type="binding site" evidence="1 5 10 11 14 15 17 19 20 21 23 24">
    <location>
        <begin position="176"/>
        <end position="177"/>
    </location>
    <ligand>
        <name>ATP</name>
        <dbReference type="ChEBI" id="CHEBI:30616"/>
    </ligand>
</feature>
<feature type="binding site" evidence="5 10 11 14 15 18 19 20 21 22 23 24">
    <location>
        <position position="188"/>
    </location>
    <ligand>
        <name>substrate</name>
    </ligand>
</feature>
<feature type="binding site" evidence="1 5 10 11 14 15 17 19 20 21 23 24">
    <location>
        <begin position="205"/>
        <end position="207"/>
    </location>
    <ligand>
        <name>ATP</name>
        <dbReference type="ChEBI" id="CHEBI:30616"/>
    </ligand>
</feature>
<feature type="binding site" evidence="1 5 10 11 14 15 17 19 21 23 24">
    <location>
        <position position="212"/>
    </location>
    <ligand>
        <name>ATP</name>
        <dbReference type="ChEBI" id="CHEBI:30616"/>
    </ligand>
</feature>
<feature type="mutagenesis site" description="Strong decrease in ATP affinity; essential role for this residue in the steady-state affinity for ATP." evidence="9">
    <original>T</original>
    <variation>V</variation>
    <location>
        <position position="12"/>
    </location>
</feature>
<feature type="mutagenesis site" description="Almost no change in activity." evidence="9">
    <original>E</original>
    <variation>A</variation>
    <variation>D</variation>
    <location>
        <position position="13"/>
    </location>
</feature>
<feature type="mutagenesis site" description="Complete loss of activity." evidence="9">
    <original>K</original>
    <variation>Q</variation>
    <location>
        <position position="16"/>
    </location>
</feature>
<feature type="mutagenesis site" description="Complete loss of activity." evidence="9">
    <original>K</original>
    <variation>L</variation>
    <variation>Q</variation>
    <variation>R</variation>
    <location>
        <position position="38"/>
    </location>
</feature>
<feature type="mutagenesis site" description="Almost no change in activity." evidence="9">
    <original>S</original>
    <variation>A</variation>
    <variation>C</variation>
    <location>
        <position position="42"/>
    </location>
</feature>
<feature type="mutagenesis site" description="Increases affinity for CTP 3-fold, no change for ATP." evidence="2">
    <original>N</original>
    <variation>A</variation>
    <location>
        <position position="176"/>
    </location>
</feature>
<feature type="sequence conflict" description="In Ref. 1; AAA23518." evidence="12" ref="1">
    <original>A</original>
    <variation>R</variation>
    <location>
        <position position="29"/>
    </location>
</feature>
<feature type="sequence conflict" description="In Ref. 3; CAA00967." evidence="12" ref="3">
    <original>QQ</original>
    <variation>HK</variation>
    <location>
        <begin position="108"/>
        <end position="109"/>
    </location>
</feature>
<feature type="sequence conflict" description="In Ref. 1; AAA23518." evidence="12" ref="1">
    <original>APLLGEIPWLAENPENAATGKYINLALL</original>
    <variation>RRCWERSPGLQKIQKMRQPEST</variation>
    <location>
        <begin position="198"/>
        <end position="225"/>
    </location>
</feature>
<feature type="strand" evidence="27">
    <location>
        <begin position="3"/>
        <end position="11"/>
    </location>
</feature>
<feature type="helix" evidence="27">
    <location>
        <begin position="16"/>
        <end position="29"/>
    </location>
</feature>
<feature type="strand" evidence="27">
    <location>
        <begin position="34"/>
        <end position="37"/>
    </location>
</feature>
<feature type="strand" evidence="27">
    <location>
        <begin position="39"/>
        <end position="43"/>
    </location>
</feature>
<feature type="strand" evidence="29">
    <location>
        <begin position="45"/>
        <end position="47"/>
    </location>
</feature>
<feature type="strand" evidence="29">
    <location>
        <begin position="50"/>
        <end position="52"/>
    </location>
</feature>
<feature type="helix" evidence="27">
    <location>
        <begin position="54"/>
        <end position="61"/>
    </location>
</feature>
<feature type="strand" evidence="28">
    <location>
        <begin position="63"/>
        <end position="65"/>
    </location>
</feature>
<feature type="helix" evidence="27">
    <location>
        <begin position="69"/>
        <end position="72"/>
    </location>
</feature>
<feature type="strand" evidence="27">
    <location>
        <begin position="74"/>
        <end position="79"/>
    </location>
</feature>
<feature type="helix" evidence="27">
    <location>
        <begin position="83"/>
        <end position="90"/>
    </location>
</feature>
<feature type="helix" evidence="27">
    <location>
        <begin position="96"/>
        <end position="107"/>
    </location>
</feature>
<feature type="strand" evidence="27">
    <location>
        <begin position="111"/>
        <end position="116"/>
    </location>
</feature>
<feature type="strand" evidence="27">
    <location>
        <begin position="118"/>
        <end position="120"/>
    </location>
</feature>
<feature type="strand" evidence="27">
    <location>
        <begin position="124"/>
        <end position="126"/>
    </location>
</feature>
<feature type="helix" evidence="27">
    <location>
        <begin position="131"/>
        <end position="138"/>
    </location>
</feature>
<feature type="strand" evidence="27">
    <location>
        <begin position="142"/>
        <end position="147"/>
    </location>
</feature>
<feature type="helix" evidence="27">
    <location>
        <begin position="152"/>
        <end position="165"/>
    </location>
</feature>
<feature type="strand" evidence="27">
    <location>
        <begin position="170"/>
        <end position="176"/>
    </location>
</feature>
<feature type="helix" evidence="27">
    <location>
        <begin position="185"/>
        <end position="195"/>
    </location>
</feature>
<feature type="strand" evidence="27">
    <location>
        <begin position="196"/>
        <end position="198"/>
    </location>
</feature>
<feature type="strand" evidence="27">
    <location>
        <begin position="200"/>
        <end position="204"/>
    </location>
</feature>
<feature type="turn" evidence="28">
    <location>
        <begin position="211"/>
        <end position="213"/>
    </location>
</feature>
<feature type="helix" evidence="27">
    <location>
        <begin position="217"/>
        <end position="219"/>
    </location>
</feature>
<feature type="helix" evidence="27">
    <location>
        <begin position="222"/>
        <end position="224"/>
    </location>
</feature>
<name>BIOD1_ECOLI</name>
<dbReference type="EC" id="6.3.3.3" evidence="1"/>
<dbReference type="EMBL" id="J04423">
    <property type="protein sequence ID" value="AAA23518.1"/>
    <property type="molecule type" value="Genomic_DNA"/>
</dbReference>
<dbReference type="EMBL" id="S68059">
    <property type="protein sequence ID" value="AAB29683.2"/>
    <property type="molecule type" value="Genomic_DNA"/>
</dbReference>
<dbReference type="EMBL" id="A11538">
    <property type="protein sequence ID" value="CAA00967.1"/>
    <property type="molecule type" value="Unassigned_DNA"/>
</dbReference>
<dbReference type="EMBL" id="U00096">
    <property type="protein sequence ID" value="AAC73865.1"/>
    <property type="molecule type" value="Genomic_DNA"/>
</dbReference>
<dbReference type="EMBL" id="AP009048">
    <property type="protein sequence ID" value="BAE76365.1"/>
    <property type="molecule type" value="Genomic_DNA"/>
</dbReference>
<dbReference type="PIR" id="B64814">
    <property type="entry name" value="SYECDB"/>
</dbReference>
<dbReference type="PDB" id="1A82">
    <property type="method" value="X-ray"/>
    <property type="resolution" value="1.80 A"/>
    <property type="chains" value="A=2-225"/>
</dbReference>
<dbReference type="PDB" id="1BS1">
    <property type="method" value="X-ray"/>
    <property type="resolution" value="1.80 A"/>
    <property type="chains" value="A=2-225"/>
</dbReference>
<dbReference type="PDB" id="1BYI">
    <property type="method" value="X-ray"/>
    <property type="resolution" value="0.97 A"/>
    <property type="chains" value="A=2-225"/>
</dbReference>
<dbReference type="PDB" id="1DAD">
    <property type="method" value="X-ray"/>
    <property type="resolution" value="1.60 A"/>
    <property type="chains" value="A=2-225"/>
</dbReference>
<dbReference type="PDB" id="1DAE">
    <property type="method" value="X-ray"/>
    <property type="resolution" value="1.70 A"/>
    <property type="chains" value="A=2-225"/>
</dbReference>
<dbReference type="PDB" id="1DAF">
    <property type="method" value="X-ray"/>
    <property type="resolution" value="1.70 A"/>
    <property type="chains" value="A=2-225"/>
</dbReference>
<dbReference type="PDB" id="1DAG">
    <property type="method" value="X-ray"/>
    <property type="resolution" value="1.64 A"/>
    <property type="chains" value="A=2-225"/>
</dbReference>
<dbReference type="PDB" id="1DAH">
    <property type="method" value="X-ray"/>
    <property type="resolution" value="1.64 A"/>
    <property type="chains" value="A=2-225"/>
</dbReference>
<dbReference type="PDB" id="1DAI">
    <property type="method" value="X-ray"/>
    <property type="resolution" value="1.64 A"/>
    <property type="chains" value="A=2-225"/>
</dbReference>
<dbReference type="PDB" id="1DAK">
    <property type="method" value="X-ray"/>
    <property type="resolution" value="1.60 A"/>
    <property type="chains" value="A=2-225"/>
</dbReference>
<dbReference type="PDB" id="1DAM">
    <property type="method" value="X-ray"/>
    <property type="resolution" value="1.80 A"/>
    <property type="chains" value="A=2-225"/>
</dbReference>
<dbReference type="PDB" id="1DBS">
    <property type="method" value="X-ray"/>
    <property type="resolution" value="1.80 A"/>
    <property type="chains" value="A=2-225"/>
</dbReference>
<dbReference type="PDB" id="1DTS">
    <property type="method" value="X-ray"/>
    <property type="resolution" value="1.65 A"/>
    <property type="chains" value="A=1-224"/>
</dbReference>
<dbReference type="PDBsum" id="1A82"/>
<dbReference type="PDBsum" id="1BS1"/>
<dbReference type="PDBsum" id="1BYI"/>
<dbReference type="PDBsum" id="1DAD"/>
<dbReference type="PDBsum" id="1DAE"/>
<dbReference type="PDBsum" id="1DAF"/>
<dbReference type="PDBsum" id="1DAG"/>
<dbReference type="PDBsum" id="1DAH"/>
<dbReference type="PDBsum" id="1DAI"/>
<dbReference type="PDBsum" id="1DAK"/>
<dbReference type="PDBsum" id="1DAM"/>
<dbReference type="PDBsum" id="1DBS"/>
<dbReference type="PDBsum" id="1DTS"/>
<dbReference type="SMR" id="P13000"/>
<dbReference type="BioGRID" id="4259956">
    <property type="interactions" value="24"/>
</dbReference>
<dbReference type="FunCoup" id="P13000">
    <property type="interactions" value="457"/>
</dbReference>
<dbReference type="IntAct" id="P13000">
    <property type="interactions" value="3"/>
</dbReference>
<dbReference type="STRING" id="511145.b0778"/>
<dbReference type="DrugBank" id="DB02941">
    <property type="generic name" value="3-(1-Aminoethyl)Nonanedioic Acid"/>
</dbReference>
<dbReference type="DrugBank" id="DB01715">
    <property type="generic name" value="7,8-Diamino-Nonanoic Acid"/>
</dbReference>
<dbReference type="DrugBank" id="DB03624">
    <property type="generic name" value="7-(Carboxyamino)-8-Amino-Nonanoic Acid"/>
</dbReference>
<dbReference type="DrugBank" id="DB03775">
    <property type="generic name" value="Dethiobiotin"/>
</dbReference>
<dbReference type="DrugBank" id="DB02927">
    <property type="generic name" value="Mixed Carbamic Phosphoric Acid Anhydride of 7,8-Diaminononanic Acid"/>
</dbReference>
<dbReference type="PaxDb" id="511145-b0778"/>
<dbReference type="EnsemblBacteria" id="AAC73865">
    <property type="protein sequence ID" value="AAC73865"/>
    <property type="gene ID" value="b0778"/>
</dbReference>
<dbReference type="KEGG" id="ecj:JW0761"/>
<dbReference type="KEGG" id="eco:b0778"/>
<dbReference type="KEGG" id="ecoc:C3026_04940"/>
<dbReference type="PATRIC" id="fig|1411691.4.peg.1500"/>
<dbReference type="EchoBASE" id="EB0118"/>
<dbReference type="eggNOG" id="COG0132">
    <property type="taxonomic scope" value="Bacteria"/>
</dbReference>
<dbReference type="HOGENOM" id="CLU_072551_0_0_6"/>
<dbReference type="InParanoid" id="P13000"/>
<dbReference type="OMA" id="NPIVIFQ"/>
<dbReference type="OrthoDB" id="9802097at2"/>
<dbReference type="PhylomeDB" id="P13000"/>
<dbReference type="BioCyc" id="EcoCyc:DETHIOBIOTIN-SYN-MONOMER"/>
<dbReference type="BioCyc" id="MetaCyc:DETHIOBIOTIN-SYN-MONOMER"/>
<dbReference type="BRENDA" id="6.3.3.3">
    <property type="organism ID" value="2026"/>
</dbReference>
<dbReference type="SABIO-RK" id="P13000"/>
<dbReference type="UniPathway" id="UPA00078">
    <property type="reaction ID" value="UER00161"/>
</dbReference>
<dbReference type="EvolutionaryTrace" id="P13000"/>
<dbReference type="PRO" id="PR:P13000"/>
<dbReference type="Proteomes" id="UP000000625">
    <property type="component" value="Chromosome"/>
</dbReference>
<dbReference type="GO" id="GO:0005829">
    <property type="term" value="C:cytosol"/>
    <property type="evidence" value="ECO:0000314"/>
    <property type="project" value="EcoCyc"/>
</dbReference>
<dbReference type="GO" id="GO:0005524">
    <property type="term" value="F:ATP binding"/>
    <property type="evidence" value="ECO:0000314"/>
    <property type="project" value="UniProtKB"/>
</dbReference>
<dbReference type="GO" id="GO:0004141">
    <property type="term" value="F:dethiobiotin synthase activity"/>
    <property type="evidence" value="ECO:0000314"/>
    <property type="project" value="UniProtKB"/>
</dbReference>
<dbReference type="GO" id="GO:0000287">
    <property type="term" value="F:magnesium ion binding"/>
    <property type="evidence" value="ECO:0000314"/>
    <property type="project" value="UniProtKB"/>
</dbReference>
<dbReference type="GO" id="GO:0042803">
    <property type="term" value="F:protein homodimerization activity"/>
    <property type="evidence" value="ECO:0000314"/>
    <property type="project" value="EcoCyc"/>
</dbReference>
<dbReference type="GO" id="GO:0009102">
    <property type="term" value="P:biotin biosynthetic process"/>
    <property type="evidence" value="ECO:0000314"/>
    <property type="project" value="UniProtKB"/>
</dbReference>
<dbReference type="CDD" id="cd03109">
    <property type="entry name" value="DTBS"/>
    <property type="match status" value="1"/>
</dbReference>
<dbReference type="FunFam" id="3.40.50.300:FF:000292">
    <property type="entry name" value="ATP-dependent dethiobiotin synthetase BioD"/>
    <property type="match status" value="1"/>
</dbReference>
<dbReference type="Gene3D" id="3.40.50.300">
    <property type="entry name" value="P-loop containing nucleotide triphosphate hydrolases"/>
    <property type="match status" value="1"/>
</dbReference>
<dbReference type="HAMAP" id="MF_00336">
    <property type="entry name" value="BioD"/>
    <property type="match status" value="1"/>
</dbReference>
<dbReference type="InterPro" id="IPR004472">
    <property type="entry name" value="DTB_synth_BioD"/>
</dbReference>
<dbReference type="InterPro" id="IPR027417">
    <property type="entry name" value="P-loop_NTPase"/>
</dbReference>
<dbReference type="NCBIfam" id="TIGR00347">
    <property type="entry name" value="bioD"/>
    <property type="match status" value="1"/>
</dbReference>
<dbReference type="PANTHER" id="PTHR43210">
    <property type="entry name" value="DETHIOBIOTIN SYNTHETASE"/>
    <property type="match status" value="1"/>
</dbReference>
<dbReference type="PANTHER" id="PTHR43210:SF5">
    <property type="entry name" value="DETHIOBIOTIN SYNTHETASE"/>
    <property type="match status" value="1"/>
</dbReference>
<dbReference type="Pfam" id="PF13500">
    <property type="entry name" value="AAA_26"/>
    <property type="match status" value="1"/>
</dbReference>
<dbReference type="PIRSF" id="PIRSF006755">
    <property type="entry name" value="DTB_synth"/>
    <property type="match status" value="1"/>
</dbReference>
<dbReference type="SUPFAM" id="SSF52540">
    <property type="entry name" value="P-loop containing nucleoside triphosphate hydrolases"/>
    <property type="match status" value="1"/>
</dbReference>